<dbReference type="EC" id="1.14.19.1" evidence="3"/>
<dbReference type="EMBL" id="EF014951">
    <property type="protein sequence ID" value="ABJ99757.1"/>
    <property type="molecule type" value="mRNA"/>
</dbReference>
<dbReference type="EMBL" id="BC112711">
    <property type="protein sequence ID" value="AAI12712.1"/>
    <property type="molecule type" value="mRNA"/>
</dbReference>
<dbReference type="RefSeq" id="NP_001070413.1">
    <property type="nucleotide sequence ID" value="NM_001076945.1"/>
</dbReference>
<dbReference type="SMR" id="Q2KIA4"/>
<dbReference type="FunCoup" id="Q2KIA4">
    <property type="interactions" value="429"/>
</dbReference>
<dbReference type="STRING" id="9913.ENSBTAP00000025820"/>
<dbReference type="PaxDb" id="9913-ENSBTAP00000025820"/>
<dbReference type="Ensembl" id="ENSBTAT00000025820.7">
    <property type="protein sequence ID" value="ENSBTAP00000025820.5"/>
    <property type="gene ID" value="ENSBTAG00000022449.6"/>
</dbReference>
<dbReference type="GeneID" id="617419"/>
<dbReference type="KEGG" id="bta:617419"/>
<dbReference type="CTD" id="79966"/>
<dbReference type="VEuPathDB" id="HostDB:ENSBTAG00000022449"/>
<dbReference type="VGNC" id="VGNC:34328">
    <property type="gene designation" value="SCD5"/>
</dbReference>
<dbReference type="eggNOG" id="KOG1600">
    <property type="taxonomic scope" value="Eukaryota"/>
</dbReference>
<dbReference type="GeneTree" id="ENSGT00940000162090"/>
<dbReference type="HOGENOM" id="CLU_027359_0_0_1"/>
<dbReference type="InParanoid" id="Q2KIA4"/>
<dbReference type="OMA" id="CQHGPID"/>
<dbReference type="OrthoDB" id="10260134at2759"/>
<dbReference type="TreeFam" id="TF313251"/>
<dbReference type="BRENDA" id="1.14.19.1">
    <property type="organism ID" value="908"/>
</dbReference>
<dbReference type="Reactome" id="R-BTA-75105">
    <property type="pathway name" value="Fatty acyl-CoA biosynthesis"/>
</dbReference>
<dbReference type="Proteomes" id="UP000009136">
    <property type="component" value="Chromosome 6"/>
</dbReference>
<dbReference type="Bgee" id="ENSBTAG00000022449">
    <property type="expression patterns" value="Expressed in midbrain and 98 other cell types or tissues"/>
</dbReference>
<dbReference type="GO" id="GO:0005789">
    <property type="term" value="C:endoplasmic reticulum membrane"/>
    <property type="evidence" value="ECO:0000250"/>
    <property type="project" value="UniProtKB"/>
</dbReference>
<dbReference type="GO" id="GO:0005506">
    <property type="term" value="F:iron ion binding"/>
    <property type="evidence" value="ECO:0000318"/>
    <property type="project" value="GO_Central"/>
</dbReference>
<dbReference type="GO" id="GO:0016491">
    <property type="term" value="F:oxidoreductase activity"/>
    <property type="evidence" value="ECO:0000250"/>
    <property type="project" value="UniProtKB"/>
</dbReference>
<dbReference type="GO" id="GO:0004768">
    <property type="term" value="F:stearoyl-CoA 9-desaturase activity"/>
    <property type="evidence" value="ECO:0000250"/>
    <property type="project" value="UniProtKB"/>
</dbReference>
<dbReference type="GO" id="GO:0006636">
    <property type="term" value="P:unsaturated fatty acid biosynthetic process"/>
    <property type="evidence" value="ECO:0000250"/>
    <property type="project" value="UniProtKB"/>
</dbReference>
<dbReference type="CDD" id="cd03505">
    <property type="entry name" value="Delta9-FADS-like"/>
    <property type="match status" value="1"/>
</dbReference>
<dbReference type="InterPro" id="IPR015876">
    <property type="entry name" value="Acyl-CoA_DS"/>
</dbReference>
<dbReference type="InterPro" id="IPR005804">
    <property type="entry name" value="FA_desaturase_dom"/>
</dbReference>
<dbReference type="InterPro" id="IPR001522">
    <property type="entry name" value="FADS-1_CS"/>
</dbReference>
<dbReference type="PANTHER" id="PTHR11351">
    <property type="entry name" value="ACYL-COA DESATURASE"/>
    <property type="match status" value="1"/>
</dbReference>
<dbReference type="PANTHER" id="PTHR11351:SF100">
    <property type="entry name" value="STEAROYL-COA DESATURASE 5"/>
    <property type="match status" value="1"/>
</dbReference>
<dbReference type="Pfam" id="PF00487">
    <property type="entry name" value="FA_desaturase"/>
    <property type="match status" value="1"/>
</dbReference>
<dbReference type="PRINTS" id="PR00075">
    <property type="entry name" value="FACDDSATRASE"/>
</dbReference>
<dbReference type="PROSITE" id="PS00476">
    <property type="entry name" value="FATTY_ACID_DESATUR_1"/>
    <property type="match status" value="1"/>
</dbReference>
<comment type="function">
    <text evidence="3">Stearoyl-CoA desaturase that utilizes O(2) and electrons from reduced cytochrome b5 to introduce the first double bond into saturated fatty acyl-CoA substrates. Catalyzes the insertion of a cis double bond at the delta-9 position into fatty acyl-CoA substrates including palmitoyl-CoA and stearoyl-CoA. Gives rise to a mixture of 16:1 and 18:1 unsaturated fatty acids. Involved in neuronal cell proliferation and differentiation through down-regulation of EGFR/AKT/MAPK and Wnt signaling pathways.</text>
</comment>
<comment type="catalytic activity">
    <reaction evidence="3">
        <text>octadecanoyl-CoA + 2 Fe(II)-[cytochrome b5] + O2 + 2 H(+) = (9Z)-octadecenoyl-CoA + 2 Fe(III)-[cytochrome b5] + 2 H2O</text>
        <dbReference type="Rhea" id="RHEA:19721"/>
        <dbReference type="Rhea" id="RHEA-COMP:10438"/>
        <dbReference type="Rhea" id="RHEA-COMP:10439"/>
        <dbReference type="ChEBI" id="CHEBI:15377"/>
        <dbReference type="ChEBI" id="CHEBI:15378"/>
        <dbReference type="ChEBI" id="CHEBI:15379"/>
        <dbReference type="ChEBI" id="CHEBI:29033"/>
        <dbReference type="ChEBI" id="CHEBI:29034"/>
        <dbReference type="ChEBI" id="CHEBI:57387"/>
        <dbReference type="ChEBI" id="CHEBI:57394"/>
        <dbReference type="EC" id="1.14.19.1"/>
    </reaction>
</comment>
<comment type="catalytic activity">
    <reaction evidence="3">
        <text>hexadecanoyl-CoA + 2 Fe(II)-[cytochrome b5] + O2 + 2 H(+) = (9Z)-hexadecenoyl-CoA + 2 Fe(III)-[cytochrome b5] + 2 H2O</text>
        <dbReference type="Rhea" id="RHEA:36931"/>
        <dbReference type="Rhea" id="RHEA-COMP:10438"/>
        <dbReference type="Rhea" id="RHEA-COMP:10439"/>
        <dbReference type="ChEBI" id="CHEBI:15377"/>
        <dbReference type="ChEBI" id="CHEBI:15378"/>
        <dbReference type="ChEBI" id="CHEBI:15379"/>
        <dbReference type="ChEBI" id="CHEBI:29033"/>
        <dbReference type="ChEBI" id="CHEBI:29034"/>
        <dbReference type="ChEBI" id="CHEBI:57379"/>
        <dbReference type="ChEBI" id="CHEBI:61540"/>
    </reaction>
</comment>
<comment type="cofactor">
    <cofactor evidence="2">
        <name>Fe(2+)</name>
        <dbReference type="ChEBI" id="CHEBI:29033"/>
    </cofactor>
    <text evidence="2">Expected to bind 2 Fe(2+) ions per subunit.</text>
</comment>
<comment type="subunit">
    <text evidence="3">May self-associate and form homodimers.</text>
</comment>
<comment type="subcellular location">
    <subcellularLocation>
        <location evidence="3">Endoplasmic reticulum membrane</location>
        <topology evidence="7">Multi-pass membrane protein</topology>
    </subcellularLocation>
</comment>
<comment type="tissue specificity">
    <text evidence="6">Detected in brain.</text>
</comment>
<comment type="domain">
    <text evidence="1">The histidine box domains are involved in binding the catalytic metal ions.</text>
</comment>
<comment type="miscellaneous">
    <text evidence="7">This protein has no ortholog in rodents.</text>
</comment>
<comment type="similarity">
    <text evidence="7">Belongs to the fatty acid desaturase type 1 family.</text>
</comment>
<evidence type="ECO:0000250" key="1">
    <source>
        <dbReference type="UniProtKB" id="O00767"/>
    </source>
</evidence>
<evidence type="ECO:0000250" key="2">
    <source>
        <dbReference type="UniProtKB" id="P13516"/>
    </source>
</evidence>
<evidence type="ECO:0000250" key="3">
    <source>
        <dbReference type="UniProtKB" id="Q86SK9"/>
    </source>
</evidence>
<evidence type="ECO:0000255" key="4"/>
<evidence type="ECO:0000256" key="5">
    <source>
        <dbReference type="SAM" id="MobiDB-lite"/>
    </source>
</evidence>
<evidence type="ECO:0000269" key="6">
    <source>
    </source>
</evidence>
<evidence type="ECO:0000305" key="7"/>
<gene>
    <name type="primary">SCD5</name>
</gene>
<feature type="chain" id="PRO_0000312652" description="Stearoyl-CoA desaturase 5">
    <location>
        <begin position="1"/>
        <end position="335"/>
    </location>
</feature>
<feature type="topological domain" description="Cytoplasmic" evidence="7">
    <location>
        <begin position="1"/>
        <end position="54"/>
    </location>
</feature>
<feature type="transmembrane region" description="Helical" evidence="4">
    <location>
        <begin position="55"/>
        <end position="75"/>
    </location>
</feature>
<feature type="topological domain" description="Lumenal" evidence="7">
    <location>
        <begin position="76"/>
        <end position="77"/>
    </location>
</feature>
<feature type="transmembrane region" description="Helical" evidence="4">
    <location>
        <begin position="78"/>
        <end position="98"/>
    </location>
</feature>
<feature type="topological domain" description="Cytoplasmic" evidence="7">
    <location>
        <begin position="99"/>
        <end position="198"/>
    </location>
</feature>
<feature type="transmembrane region" description="Helical" evidence="4">
    <location>
        <begin position="199"/>
        <end position="219"/>
    </location>
</feature>
<feature type="topological domain" description="Lumenal" evidence="7">
    <location>
        <begin position="220"/>
        <end position="227"/>
    </location>
</feature>
<feature type="transmembrane region" description="Helical" evidence="4">
    <location>
        <begin position="228"/>
        <end position="247"/>
    </location>
</feature>
<feature type="topological domain" description="Cytoplasmic" evidence="7">
    <location>
        <begin position="248"/>
        <end position="335"/>
    </location>
</feature>
<feature type="region of interest" description="Disordered" evidence="5">
    <location>
        <begin position="24"/>
        <end position="44"/>
    </location>
</feature>
<feature type="short sequence motif" description="Histidine box-1" evidence="7">
    <location>
        <begin position="99"/>
        <end position="104"/>
    </location>
</feature>
<feature type="short sequence motif" description="Histidine box-2" evidence="7">
    <location>
        <begin position="136"/>
        <end position="140"/>
    </location>
</feature>
<feature type="short sequence motif" description="Histidine box-3" evidence="7">
    <location>
        <begin position="277"/>
        <end position="281"/>
    </location>
</feature>
<feature type="compositionally biased region" description="Gly residues" evidence="5">
    <location>
        <begin position="25"/>
        <end position="36"/>
    </location>
</feature>
<feature type="binding site" evidence="1">
    <location>
        <position position="54"/>
    </location>
    <ligand>
        <name>substrate</name>
    </ligand>
</feature>
<feature type="binding site" evidence="2">
    <location>
        <position position="99"/>
    </location>
    <ligand>
        <name>Fe cation</name>
        <dbReference type="ChEBI" id="CHEBI:24875"/>
        <label>1</label>
    </ligand>
</feature>
<feature type="binding site" evidence="2">
    <location>
        <position position="104"/>
    </location>
    <ligand>
        <name>Fe cation</name>
        <dbReference type="ChEBI" id="CHEBI:24875"/>
        <label>1</label>
    </ligand>
</feature>
<feature type="binding site" evidence="1">
    <location>
        <position position="127"/>
    </location>
    <ligand>
        <name>substrate</name>
    </ligand>
</feature>
<feature type="binding site" evidence="1">
    <location>
        <position position="134"/>
    </location>
    <ligand>
        <name>substrate</name>
    </ligand>
</feature>
<feature type="binding site" evidence="1">
    <location>
        <position position="135"/>
    </location>
    <ligand>
        <name>substrate</name>
    </ligand>
</feature>
<feature type="binding site" evidence="2">
    <location>
        <position position="136"/>
    </location>
    <ligand>
        <name>Fe cation</name>
        <dbReference type="ChEBI" id="CHEBI:24875"/>
        <label>1</label>
    </ligand>
</feature>
<feature type="binding site" evidence="2">
    <location>
        <position position="139"/>
    </location>
    <ligand>
        <name>Fe cation</name>
        <dbReference type="ChEBI" id="CHEBI:24875"/>
        <label>2</label>
    </ligand>
</feature>
<feature type="binding site" evidence="2">
    <location>
        <position position="140"/>
    </location>
    <ligand>
        <name>Fe cation</name>
        <dbReference type="ChEBI" id="CHEBI:24875"/>
        <label>1</label>
    </ligand>
</feature>
<feature type="binding site" evidence="1">
    <location>
        <position position="167"/>
    </location>
    <ligand>
        <name>substrate</name>
    </ligand>
</feature>
<feature type="binding site" evidence="1">
    <location>
        <position position="168"/>
    </location>
    <ligand>
        <name>substrate</name>
    </ligand>
</feature>
<feature type="binding site" evidence="1">
    <location>
        <position position="241"/>
    </location>
    <ligand>
        <name>substrate</name>
    </ligand>
</feature>
<feature type="binding site" evidence="2">
    <location>
        <position position="248"/>
    </location>
    <ligand>
        <name>Fe cation</name>
        <dbReference type="ChEBI" id="CHEBI:24875"/>
        <label>2</label>
    </ligand>
</feature>
<feature type="binding site" evidence="2">
    <location>
        <position position="277"/>
    </location>
    <ligand>
        <name>Fe cation</name>
        <dbReference type="ChEBI" id="CHEBI:24875"/>
        <label>2</label>
    </ligand>
</feature>
<feature type="binding site" evidence="2">
    <location>
        <position position="280"/>
    </location>
    <ligand>
        <name>Fe cation</name>
        <dbReference type="ChEBI" id="CHEBI:24875"/>
        <label>1</label>
    </ligand>
</feature>
<feature type="binding site" evidence="2">
    <location>
        <position position="281"/>
    </location>
    <ligand>
        <name>Fe cation</name>
        <dbReference type="ChEBI" id="CHEBI:24875"/>
        <label>2</label>
    </ligand>
</feature>
<organism>
    <name type="scientific">Bos taurus</name>
    <name type="common">Bovine</name>
    <dbReference type="NCBI Taxonomy" id="9913"/>
    <lineage>
        <taxon>Eukaryota</taxon>
        <taxon>Metazoa</taxon>
        <taxon>Chordata</taxon>
        <taxon>Craniata</taxon>
        <taxon>Vertebrata</taxon>
        <taxon>Euteleostomi</taxon>
        <taxon>Mammalia</taxon>
        <taxon>Eutheria</taxon>
        <taxon>Laurasiatheria</taxon>
        <taxon>Artiodactyla</taxon>
        <taxon>Ruminantia</taxon>
        <taxon>Pecora</taxon>
        <taxon>Bovidae</taxon>
        <taxon>Bovinae</taxon>
        <taxon>Bos</taxon>
    </lineage>
</organism>
<accession>Q2KIA4</accession>
<name>SCD5_BOVIN</name>
<keyword id="KW-0256">Endoplasmic reticulum</keyword>
<keyword id="KW-0275">Fatty acid biosynthesis</keyword>
<keyword id="KW-0276">Fatty acid metabolism</keyword>
<keyword id="KW-0408">Iron</keyword>
<keyword id="KW-0444">Lipid biosynthesis</keyword>
<keyword id="KW-0443">Lipid metabolism</keyword>
<keyword id="KW-0472">Membrane</keyword>
<keyword id="KW-0479">Metal-binding</keyword>
<keyword id="KW-0560">Oxidoreductase</keyword>
<keyword id="KW-1185">Reference proteome</keyword>
<keyword id="KW-0812">Transmembrane</keyword>
<keyword id="KW-1133">Transmembrane helix</keyword>
<sequence length="335" mass="38215">MPGPAVDAEKVPFRSAKEEIRAGVGVEGSEGGGGGGGRERPGARGHRQDIVWRNVFLMSLLHLAAVYSLVLIPKAQPLTLLWAYFCFLLTALGVTAGAHRLWSHRSYKAKLPLRIFLAAANSMAFQNDIFEWSRDHRVHHKYSETDADPHNARRGFFFSHIGWLFVRKHRDVIEKGRKLDVTDLLADPVVRFQRKYYKITVVLMCFVVPTLVPWYIWGESLWNSYFLASILRYTISLNVTWLVNSVAHMYGNRPYDKHISPRQNPLVTLGAIGEGFHNYHHTFPFDYSASEFGLNFNPTTWFIDFMCWLGLATDRKRATKQMIEARKARTGDGSA</sequence>
<proteinExistence type="evidence at transcript level"/>
<reference key="1">
    <citation type="journal article" date="2007" name="Lipids">
        <title>Identification and characterization of a novel bovine stearoyl-CoA desaturase isoform with homology to human SCD5.</title>
        <authorList>
            <person name="Lengi A.J."/>
            <person name="Corl B.A."/>
        </authorList>
    </citation>
    <scope>NUCLEOTIDE SEQUENCE [MRNA]</scope>
    <scope>TISSUE SPECIFICITY</scope>
</reference>
<reference key="2">
    <citation type="submission" date="2006-01" db="EMBL/GenBank/DDBJ databases">
        <authorList>
            <consortium name="NIH - Mammalian Gene Collection (MGC) project"/>
        </authorList>
    </citation>
    <scope>NUCLEOTIDE SEQUENCE [LARGE SCALE MRNA]</scope>
    <source>
        <strain>Hereford</strain>
        <tissue>Hypothalamus</tissue>
    </source>
</reference>
<protein>
    <recommendedName>
        <fullName>Stearoyl-CoA desaturase 5</fullName>
        <ecNumber evidence="3">1.14.19.1</ecNumber>
    </recommendedName>
    <alternativeName>
        <fullName>Acyl-CoA-desaturase 4</fullName>
    </alternativeName>
    <alternativeName>
        <fullName>Stearoyl-CoA 9-desaturase</fullName>
    </alternativeName>
</protein>